<name>RR18_PLAOC</name>
<sequence length="101" mass="11921">MDKPKRLFLKSKRSFRRRLPPIGSGDRIDYRNMSLISRFISEQGKILSRRVNRLTLKQQRLITIAIKQARILSSLPFLNNEKQFERAESTPRTPGPRTRNK</sequence>
<accession>Q09G24</accession>
<organism>
    <name type="scientific">Platanus occidentalis</name>
    <name type="common">Sycamore</name>
    <name type="synonym">American plane tree</name>
    <dbReference type="NCBI Taxonomy" id="4403"/>
    <lineage>
        <taxon>Eukaryota</taxon>
        <taxon>Viridiplantae</taxon>
        <taxon>Streptophyta</taxon>
        <taxon>Embryophyta</taxon>
        <taxon>Tracheophyta</taxon>
        <taxon>Spermatophyta</taxon>
        <taxon>Magnoliopsida</taxon>
        <taxon>Proteales</taxon>
        <taxon>Platanaceae</taxon>
        <taxon>Platanus</taxon>
    </lineage>
</organism>
<geneLocation type="chloroplast"/>
<comment type="subunit">
    <text evidence="1">Part of the 30S ribosomal subunit.</text>
</comment>
<comment type="subcellular location">
    <subcellularLocation>
        <location>Plastid</location>
        <location>Chloroplast</location>
    </subcellularLocation>
</comment>
<comment type="similarity">
    <text evidence="1">Belongs to the bacterial ribosomal protein bS18 family.</text>
</comment>
<reference key="1">
    <citation type="journal article" date="2006" name="BMC Plant Biol.">
        <title>Rapid and accurate pyrosequencing of angiosperm plastid genomes.</title>
        <authorList>
            <person name="Moore M.J."/>
            <person name="Dhingra A."/>
            <person name="Soltis P.S."/>
            <person name="Shaw R."/>
            <person name="Farmerie W.G."/>
            <person name="Folta K.M."/>
            <person name="Soltis D.E."/>
        </authorList>
    </citation>
    <scope>NUCLEOTIDE SEQUENCE [LARGE SCALE GENOMIC DNA]</scope>
</reference>
<evidence type="ECO:0000255" key="1">
    <source>
        <dbReference type="HAMAP-Rule" id="MF_00270"/>
    </source>
</evidence>
<evidence type="ECO:0000256" key="2">
    <source>
        <dbReference type="SAM" id="MobiDB-lite"/>
    </source>
</evidence>
<evidence type="ECO:0000305" key="3"/>
<protein>
    <recommendedName>
        <fullName evidence="1">Small ribosomal subunit protein bS18c</fullName>
    </recommendedName>
    <alternativeName>
        <fullName evidence="3">30S ribosomal protein S18, chloroplastic</fullName>
    </alternativeName>
</protein>
<keyword id="KW-0150">Chloroplast</keyword>
<keyword id="KW-0934">Plastid</keyword>
<keyword id="KW-0687">Ribonucleoprotein</keyword>
<keyword id="KW-0689">Ribosomal protein</keyword>
<keyword id="KW-0694">RNA-binding</keyword>
<keyword id="KW-0699">rRNA-binding</keyword>
<gene>
    <name evidence="1" type="primary">rps18</name>
</gene>
<proteinExistence type="inferred from homology"/>
<dbReference type="EMBL" id="DQ923116">
    <property type="protein sequence ID" value="ABI49800.1"/>
    <property type="molecule type" value="Genomic_DNA"/>
</dbReference>
<dbReference type="RefSeq" id="YP_740587.1">
    <property type="nucleotide sequence ID" value="NC_008335.1"/>
</dbReference>
<dbReference type="SMR" id="Q09G24"/>
<dbReference type="GeneID" id="4271249"/>
<dbReference type="GO" id="GO:0009507">
    <property type="term" value="C:chloroplast"/>
    <property type="evidence" value="ECO:0007669"/>
    <property type="project" value="UniProtKB-SubCell"/>
</dbReference>
<dbReference type="GO" id="GO:0005763">
    <property type="term" value="C:mitochondrial small ribosomal subunit"/>
    <property type="evidence" value="ECO:0007669"/>
    <property type="project" value="TreeGrafter"/>
</dbReference>
<dbReference type="GO" id="GO:0070181">
    <property type="term" value="F:small ribosomal subunit rRNA binding"/>
    <property type="evidence" value="ECO:0007669"/>
    <property type="project" value="TreeGrafter"/>
</dbReference>
<dbReference type="GO" id="GO:0003735">
    <property type="term" value="F:structural constituent of ribosome"/>
    <property type="evidence" value="ECO:0007669"/>
    <property type="project" value="InterPro"/>
</dbReference>
<dbReference type="GO" id="GO:0006412">
    <property type="term" value="P:translation"/>
    <property type="evidence" value="ECO:0007669"/>
    <property type="project" value="UniProtKB-UniRule"/>
</dbReference>
<dbReference type="FunFam" id="4.10.640.10:FF:000002">
    <property type="entry name" value="30S ribosomal protein S18, chloroplastic"/>
    <property type="match status" value="1"/>
</dbReference>
<dbReference type="Gene3D" id="4.10.640.10">
    <property type="entry name" value="Ribosomal protein S18"/>
    <property type="match status" value="1"/>
</dbReference>
<dbReference type="HAMAP" id="MF_00270">
    <property type="entry name" value="Ribosomal_bS18"/>
    <property type="match status" value="1"/>
</dbReference>
<dbReference type="InterPro" id="IPR001648">
    <property type="entry name" value="Ribosomal_bS18"/>
</dbReference>
<dbReference type="InterPro" id="IPR018275">
    <property type="entry name" value="Ribosomal_bS18_CS"/>
</dbReference>
<dbReference type="InterPro" id="IPR036870">
    <property type="entry name" value="Ribosomal_bS18_sf"/>
</dbReference>
<dbReference type="NCBIfam" id="TIGR00165">
    <property type="entry name" value="S18"/>
    <property type="match status" value="1"/>
</dbReference>
<dbReference type="PANTHER" id="PTHR13479">
    <property type="entry name" value="30S RIBOSOMAL PROTEIN S18"/>
    <property type="match status" value="1"/>
</dbReference>
<dbReference type="PANTHER" id="PTHR13479:SF40">
    <property type="entry name" value="SMALL RIBOSOMAL SUBUNIT PROTEIN BS18M"/>
    <property type="match status" value="1"/>
</dbReference>
<dbReference type="Pfam" id="PF01084">
    <property type="entry name" value="Ribosomal_S18"/>
    <property type="match status" value="1"/>
</dbReference>
<dbReference type="PRINTS" id="PR00974">
    <property type="entry name" value="RIBOSOMALS18"/>
</dbReference>
<dbReference type="SUPFAM" id="SSF46911">
    <property type="entry name" value="Ribosomal protein S18"/>
    <property type="match status" value="1"/>
</dbReference>
<dbReference type="PROSITE" id="PS00057">
    <property type="entry name" value="RIBOSOMAL_S18"/>
    <property type="match status" value="1"/>
</dbReference>
<feature type="chain" id="PRO_0000345604" description="Small ribosomal subunit protein bS18c">
    <location>
        <begin position="1"/>
        <end position="101"/>
    </location>
</feature>
<feature type="region of interest" description="Disordered" evidence="2">
    <location>
        <begin position="82"/>
        <end position="101"/>
    </location>
</feature>